<sequence length="275" mass="28610">MKLKGEVALVTGGGAGLGRAIVDRYVAEGARVAVLDKSAAGLEEIRKRHGDAVVGIEGDVRSLDSHREAVARCVETFGKLDCLIGNAGVWDYQTQLADIPDNGISEAFDEMFAIIVKGYILAAKAALPALYKSKGSAIFTVSNAGFYPGGGGVLYTAGKHAVIGLVKQLAHEWGPRIRVNGIAPGGILGSDIRGLKTLGLQDQTIATMPLADMLGPVLPTGRVATAEEYAGAYVFFATRADTVPLTGSVLNIDGGMGVRGLFEASLGAQLDKHFA</sequence>
<accession>O69264</accession>
<organism>
    <name type="scientific">Cupriavidus sp. (strain PS12)</name>
    <dbReference type="NCBI Taxonomy" id="393999"/>
    <lineage>
        <taxon>Bacteria</taxon>
        <taxon>Pseudomonadati</taxon>
        <taxon>Pseudomonadota</taxon>
        <taxon>Betaproteobacteria</taxon>
        <taxon>Burkholderiales</taxon>
        <taxon>Burkholderiaceae</taxon>
        <taxon>Cupriavidus</taxon>
    </lineage>
</organism>
<feature type="chain" id="PRO_0000453519" description="Chlorobenzene dihydrodiol dehydrogenase">
    <location>
        <begin position="1"/>
        <end position="275"/>
    </location>
</feature>
<feature type="active site" description="Proton acceptor" evidence="1">
    <location>
        <position position="155"/>
    </location>
</feature>
<keyword id="KW-0058">Aromatic hydrocarbons catabolism</keyword>
<keyword id="KW-0520">NAD</keyword>
<keyword id="KW-0560">Oxidoreductase</keyword>
<comment type="function">
    <text evidence="2 3">Can transform various dihydrodiols of chlorobenzenes and chlorotoluenes into the respective catechols.</text>
</comment>
<comment type="catalytic activity">
    <reaction evidence="2 3">
        <text>(1R,2R)-3-chlorocyclohexa-3,5-diene-1,2-diol + NAD(+) = 3-chlorocatechol + NADH + H(+)</text>
        <dbReference type="Rhea" id="RHEA:57608"/>
        <dbReference type="ChEBI" id="CHEBI:15378"/>
        <dbReference type="ChEBI" id="CHEBI:19981"/>
        <dbReference type="ChEBI" id="CHEBI:27715"/>
        <dbReference type="ChEBI" id="CHEBI:57540"/>
        <dbReference type="ChEBI" id="CHEBI:57945"/>
        <dbReference type="EC" id="1.3.1.119"/>
    </reaction>
</comment>
<comment type="pathway">
    <text evidence="6">Aromatic compound metabolism.</text>
</comment>
<comment type="similarity">
    <text evidence="6">Belongs to the short-chain dehydrogenases/reductases (SDR) family.</text>
</comment>
<gene>
    <name evidence="5" type="primary">tecB</name>
</gene>
<dbReference type="EC" id="1.3.1.119" evidence="2 3"/>
<dbReference type="EMBL" id="U78099">
    <property type="protein sequence ID" value="AAC46395.1"/>
    <property type="molecule type" value="Genomic_DNA"/>
</dbReference>
<dbReference type="SMR" id="O69264"/>
<dbReference type="BioCyc" id="MetaCyc:MONOMER-14401"/>
<dbReference type="BRENDA" id="1.3.1.119">
    <property type="organism ID" value="16224"/>
</dbReference>
<dbReference type="GO" id="GO:0016628">
    <property type="term" value="F:oxidoreductase activity, acting on the CH-CH group of donors, NAD or NADP as acceptor"/>
    <property type="evidence" value="ECO:0007669"/>
    <property type="project" value="InterPro"/>
</dbReference>
<dbReference type="GO" id="GO:0016616">
    <property type="term" value="F:oxidoreductase activity, acting on the CH-OH group of donors, NAD or NADP as acceptor"/>
    <property type="evidence" value="ECO:0007669"/>
    <property type="project" value="TreeGrafter"/>
</dbReference>
<dbReference type="GO" id="GO:0009056">
    <property type="term" value="P:catabolic process"/>
    <property type="evidence" value="ECO:0007669"/>
    <property type="project" value="UniProtKB-KW"/>
</dbReference>
<dbReference type="CDD" id="cd05348">
    <property type="entry name" value="BphB-like_SDR_c"/>
    <property type="match status" value="1"/>
</dbReference>
<dbReference type="FunFam" id="3.40.50.720:FF:000151">
    <property type="entry name" value="3-phenylpropionate-dihydrodiol/cinnamic acid-dihydrodiol dehydrogenase"/>
    <property type="match status" value="1"/>
</dbReference>
<dbReference type="Gene3D" id="3.40.50.720">
    <property type="entry name" value="NAD(P)-binding Rossmann-like Domain"/>
    <property type="match status" value="1"/>
</dbReference>
<dbReference type="InterPro" id="IPR047950">
    <property type="entry name" value="BphB-like_SDR"/>
</dbReference>
<dbReference type="InterPro" id="IPR017711">
    <property type="entry name" value="BphB_TodD"/>
</dbReference>
<dbReference type="InterPro" id="IPR036291">
    <property type="entry name" value="NAD(P)-bd_dom_sf"/>
</dbReference>
<dbReference type="InterPro" id="IPR020904">
    <property type="entry name" value="Sc_DH/Rdtase_CS"/>
</dbReference>
<dbReference type="InterPro" id="IPR002347">
    <property type="entry name" value="SDR_fam"/>
</dbReference>
<dbReference type="NCBIfam" id="TIGR03325">
    <property type="entry name" value="BphB_TodD"/>
    <property type="match status" value="1"/>
</dbReference>
<dbReference type="NCBIfam" id="NF004849">
    <property type="entry name" value="PRK06200.1"/>
    <property type="match status" value="1"/>
</dbReference>
<dbReference type="PANTHER" id="PTHR42760:SF115">
    <property type="entry name" value="3-OXOACYL-[ACYL-CARRIER-PROTEIN] REDUCTASE FABG"/>
    <property type="match status" value="1"/>
</dbReference>
<dbReference type="PANTHER" id="PTHR42760">
    <property type="entry name" value="SHORT-CHAIN DEHYDROGENASES/REDUCTASES FAMILY MEMBER"/>
    <property type="match status" value="1"/>
</dbReference>
<dbReference type="Pfam" id="PF00106">
    <property type="entry name" value="adh_short"/>
    <property type="match status" value="1"/>
</dbReference>
<dbReference type="PRINTS" id="PR00081">
    <property type="entry name" value="GDHRDH"/>
</dbReference>
<dbReference type="PRINTS" id="PR00080">
    <property type="entry name" value="SDRFAMILY"/>
</dbReference>
<dbReference type="SUPFAM" id="SSF51735">
    <property type="entry name" value="NAD(P)-binding Rossmann-fold domains"/>
    <property type="match status" value="1"/>
</dbReference>
<dbReference type="PROSITE" id="PS00061">
    <property type="entry name" value="ADH_SHORT"/>
    <property type="match status" value="1"/>
</dbReference>
<protein>
    <recommendedName>
        <fullName evidence="4">Chlorobenzene dihydrodiol dehydrogenase</fullName>
        <ecNumber evidence="2 3">1.3.1.119</ecNumber>
    </recommendedName>
</protein>
<proteinExistence type="evidence at protein level"/>
<name>TECB_CUPXP</name>
<reference key="1">
    <citation type="journal article" date="1997" name="Eur. J. Biochem.">
        <title>Genetic and biochemical characterization of the broad spectrum chlorobenzene dioxygenase from Burkholderia sp. strain PS12--dechlorination of 1,2,4,5-tetrachlorobenzene.</title>
        <authorList>
            <person name="Beil S."/>
            <person name="Happe B."/>
            <person name="Timmis K.N."/>
            <person name="Pieper D.H."/>
        </authorList>
    </citation>
    <scope>NUCLEOTIDE SEQUENCE [GENOMIC DNA]</scope>
    <source>
        <strain>PS12</strain>
    </source>
</reference>
<reference key="2">
    <citation type="journal article" date="2001" name="Appl. Environ. Microbiol.">
        <title>Transformation of chlorinated benzenes and toluenes by Ralstonia sp. strain PS12 tecA (tetrachlorobenzene dioxygenase) and tecB (chlorobenzene dihydrodiol dehydrogenase) gene products.</title>
        <authorList>
            <person name="Pollmann K."/>
            <person name="Beil S."/>
            <person name="Pieper D.H."/>
        </authorList>
    </citation>
    <scope>FUNCTION</scope>
    <scope>CATALYTIC ACTIVITY</scope>
    <source>
        <strain>PS12</strain>
    </source>
</reference>
<reference key="3">
    <citation type="journal article" date="2005" name="J. Bacteriol.">
        <title>Chloromethylmuconolactones as critical metabolites in the degradation of chloromethylcatechols: recalcitrance of 2-chlorotoluene.</title>
        <authorList>
            <person name="Pollmann K."/>
            <person name="Wray V."/>
            <person name="Pieper D.H."/>
        </authorList>
    </citation>
    <scope>FUNCTION</scope>
    <scope>CATALYTIC ACTIVITY</scope>
    <source>
        <strain>PS12</strain>
    </source>
</reference>
<evidence type="ECO:0000255" key="1">
    <source>
        <dbReference type="PROSITE-ProRule" id="PRU10001"/>
    </source>
</evidence>
<evidence type="ECO:0000269" key="2">
    <source>
    </source>
</evidence>
<evidence type="ECO:0000269" key="3">
    <source>
    </source>
</evidence>
<evidence type="ECO:0000303" key="4">
    <source>
    </source>
</evidence>
<evidence type="ECO:0000303" key="5">
    <source>
    </source>
</evidence>
<evidence type="ECO:0000305" key="6"/>